<gene>
    <name evidence="1" type="primary">pfkA</name>
    <name type="ordered locus">HAPS_2188</name>
</gene>
<keyword id="KW-0021">Allosteric enzyme</keyword>
<keyword id="KW-0067">ATP-binding</keyword>
<keyword id="KW-0963">Cytoplasm</keyword>
<keyword id="KW-0324">Glycolysis</keyword>
<keyword id="KW-0418">Kinase</keyword>
<keyword id="KW-0460">Magnesium</keyword>
<keyword id="KW-0479">Metal-binding</keyword>
<keyword id="KW-0547">Nucleotide-binding</keyword>
<keyword id="KW-1185">Reference proteome</keyword>
<keyword id="KW-0808">Transferase</keyword>
<protein>
    <recommendedName>
        <fullName evidence="1">ATP-dependent 6-phosphofructokinase</fullName>
        <shortName evidence="1">ATP-PFK</shortName>
        <shortName evidence="1">Phosphofructokinase</shortName>
        <ecNumber evidence="1">2.7.1.11</ecNumber>
    </recommendedName>
    <alternativeName>
        <fullName evidence="1">Phosphohexokinase</fullName>
    </alternativeName>
</protein>
<comment type="function">
    <text evidence="1">Catalyzes the phosphorylation of D-fructose 6-phosphate to fructose 1,6-bisphosphate by ATP, the first committing step of glycolysis.</text>
</comment>
<comment type="catalytic activity">
    <reaction evidence="1">
        <text>beta-D-fructose 6-phosphate + ATP = beta-D-fructose 1,6-bisphosphate + ADP + H(+)</text>
        <dbReference type="Rhea" id="RHEA:16109"/>
        <dbReference type="ChEBI" id="CHEBI:15378"/>
        <dbReference type="ChEBI" id="CHEBI:30616"/>
        <dbReference type="ChEBI" id="CHEBI:32966"/>
        <dbReference type="ChEBI" id="CHEBI:57634"/>
        <dbReference type="ChEBI" id="CHEBI:456216"/>
        <dbReference type="EC" id="2.7.1.11"/>
    </reaction>
</comment>
<comment type="cofactor">
    <cofactor evidence="1">
        <name>Mg(2+)</name>
        <dbReference type="ChEBI" id="CHEBI:18420"/>
    </cofactor>
</comment>
<comment type="activity regulation">
    <text evidence="1">Allosterically activated by ADP and other diphosphonucleosides, and allosterically inhibited by phosphoenolpyruvate.</text>
</comment>
<comment type="pathway">
    <text evidence="1">Carbohydrate degradation; glycolysis; D-glyceraldehyde 3-phosphate and glycerone phosphate from D-glucose: step 3/4.</text>
</comment>
<comment type="subunit">
    <text evidence="1">Homotetramer.</text>
</comment>
<comment type="subcellular location">
    <subcellularLocation>
        <location evidence="1">Cytoplasm</location>
    </subcellularLocation>
</comment>
<comment type="similarity">
    <text evidence="1">Belongs to the phosphofructokinase type A (PFKA) family. ATP-dependent PFK group I subfamily. Prokaryotic clade 'B1' sub-subfamily.</text>
</comment>
<reference key="1">
    <citation type="journal article" date="2009" name="J. Bacteriol.">
        <title>Complete genome sequence of Haemophilus parasuis SH0165.</title>
        <authorList>
            <person name="Yue M."/>
            <person name="Yang F."/>
            <person name="Yang J."/>
            <person name="Bei W."/>
            <person name="Cai X."/>
            <person name="Chen L."/>
            <person name="Dong J."/>
            <person name="Zhou R."/>
            <person name="Jin M."/>
            <person name="Jin Q."/>
            <person name="Chen H."/>
        </authorList>
    </citation>
    <scope>NUCLEOTIDE SEQUENCE [LARGE SCALE GENOMIC DNA]</scope>
    <source>
        <strain>SH0165</strain>
    </source>
</reference>
<evidence type="ECO:0000255" key="1">
    <source>
        <dbReference type="HAMAP-Rule" id="MF_00339"/>
    </source>
</evidence>
<proteinExistence type="inferred from homology"/>
<name>PFKA_GLAP5</name>
<organism>
    <name type="scientific">Glaesserella parasuis serovar 5 (strain SH0165)</name>
    <name type="common">Haemophilus parasuis</name>
    <dbReference type="NCBI Taxonomy" id="557723"/>
    <lineage>
        <taxon>Bacteria</taxon>
        <taxon>Pseudomonadati</taxon>
        <taxon>Pseudomonadota</taxon>
        <taxon>Gammaproteobacteria</taxon>
        <taxon>Pasteurellales</taxon>
        <taxon>Pasteurellaceae</taxon>
        <taxon>Glaesserella</taxon>
    </lineage>
</organism>
<dbReference type="EC" id="2.7.1.11" evidence="1"/>
<dbReference type="EMBL" id="CP001321">
    <property type="protein sequence ID" value="ACL33621.1"/>
    <property type="molecule type" value="Genomic_DNA"/>
</dbReference>
<dbReference type="RefSeq" id="WP_010786020.1">
    <property type="nucleotide sequence ID" value="NC_011852.1"/>
</dbReference>
<dbReference type="SMR" id="B8F8G9"/>
<dbReference type="STRING" id="557723.HAPS_2188"/>
<dbReference type="GeneID" id="66619630"/>
<dbReference type="KEGG" id="hap:HAPS_2188"/>
<dbReference type="HOGENOM" id="CLU_020655_0_1_6"/>
<dbReference type="UniPathway" id="UPA00109">
    <property type="reaction ID" value="UER00182"/>
</dbReference>
<dbReference type="Proteomes" id="UP000006743">
    <property type="component" value="Chromosome"/>
</dbReference>
<dbReference type="GO" id="GO:0005945">
    <property type="term" value="C:6-phosphofructokinase complex"/>
    <property type="evidence" value="ECO:0007669"/>
    <property type="project" value="TreeGrafter"/>
</dbReference>
<dbReference type="GO" id="GO:0003872">
    <property type="term" value="F:6-phosphofructokinase activity"/>
    <property type="evidence" value="ECO:0007669"/>
    <property type="project" value="UniProtKB-UniRule"/>
</dbReference>
<dbReference type="GO" id="GO:0016208">
    <property type="term" value="F:AMP binding"/>
    <property type="evidence" value="ECO:0007669"/>
    <property type="project" value="TreeGrafter"/>
</dbReference>
<dbReference type="GO" id="GO:0005524">
    <property type="term" value="F:ATP binding"/>
    <property type="evidence" value="ECO:0007669"/>
    <property type="project" value="UniProtKB-KW"/>
</dbReference>
<dbReference type="GO" id="GO:0070095">
    <property type="term" value="F:fructose-6-phosphate binding"/>
    <property type="evidence" value="ECO:0007669"/>
    <property type="project" value="TreeGrafter"/>
</dbReference>
<dbReference type="GO" id="GO:0042802">
    <property type="term" value="F:identical protein binding"/>
    <property type="evidence" value="ECO:0007669"/>
    <property type="project" value="TreeGrafter"/>
</dbReference>
<dbReference type="GO" id="GO:0046872">
    <property type="term" value="F:metal ion binding"/>
    <property type="evidence" value="ECO:0007669"/>
    <property type="project" value="UniProtKB-KW"/>
</dbReference>
<dbReference type="GO" id="GO:0048029">
    <property type="term" value="F:monosaccharide binding"/>
    <property type="evidence" value="ECO:0007669"/>
    <property type="project" value="TreeGrafter"/>
</dbReference>
<dbReference type="GO" id="GO:0061621">
    <property type="term" value="P:canonical glycolysis"/>
    <property type="evidence" value="ECO:0007669"/>
    <property type="project" value="TreeGrafter"/>
</dbReference>
<dbReference type="GO" id="GO:0030388">
    <property type="term" value="P:fructose 1,6-bisphosphate metabolic process"/>
    <property type="evidence" value="ECO:0007669"/>
    <property type="project" value="TreeGrafter"/>
</dbReference>
<dbReference type="GO" id="GO:0006002">
    <property type="term" value="P:fructose 6-phosphate metabolic process"/>
    <property type="evidence" value="ECO:0007669"/>
    <property type="project" value="InterPro"/>
</dbReference>
<dbReference type="CDD" id="cd00763">
    <property type="entry name" value="Bacterial_PFK"/>
    <property type="match status" value="1"/>
</dbReference>
<dbReference type="FunFam" id="3.40.50.450:FF:000001">
    <property type="entry name" value="ATP-dependent 6-phosphofructokinase"/>
    <property type="match status" value="1"/>
</dbReference>
<dbReference type="FunFam" id="3.40.50.460:FF:000002">
    <property type="entry name" value="ATP-dependent 6-phosphofructokinase"/>
    <property type="match status" value="1"/>
</dbReference>
<dbReference type="Gene3D" id="3.40.50.450">
    <property type="match status" value="1"/>
</dbReference>
<dbReference type="Gene3D" id="3.40.50.460">
    <property type="entry name" value="Phosphofructokinase domain"/>
    <property type="match status" value="1"/>
</dbReference>
<dbReference type="HAMAP" id="MF_00339">
    <property type="entry name" value="Phosphofructokinase_I_B1"/>
    <property type="match status" value="1"/>
</dbReference>
<dbReference type="InterPro" id="IPR022953">
    <property type="entry name" value="ATP_PFK"/>
</dbReference>
<dbReference type="InterPro" id="IPR012003">
    <property type="entry name" value="ATP_PFK_prok-type"/>
</dbReference>
<dbReference type="InterPro" id="IPR012828">
    <property type="entry name" value="PFKA_ATP_prok"/>
</dbReference>
<dbReference type="InterPro" id="IPR015912">
    <property type="entry name" value="Phosphofructokinase_CS"/>
</dbReference>
<dbReference type="InterPro" id="IPR000023">
    <property type="entry name" value="Phosphofructokinase_dom"/>
</dbReference>
<dbReference type="InterPro" id="IPR035966">
    <property type="entry name" value="PKF_sf"/>
</dbReference>
<dbReference type="NCBIfam" id="TIGR02482">
    <property type="entry name" value="PFKA_ATP"/>
    <property type="match status" value="1"/>
</dbReference>
<dbReference type="NCBIfam" id="NF002872">
    <property type="entry name" value="PRK03202.1"/>
    <property type="match status" value="1"/>
</dbReference>
<dbReference type="PANTHER" id="PTHR13697:SF4">
    <property type="entry name" value="ATP-DEPENDENT 6-PHOSPHOFRUCTOKINASE"/>
    <property type="match status" value="1"/>
</dbReference>
<dbReference type="PANTHER" id="PTHR13697">
    <property type="entry name" value="PHOSPHOFRUCTOKINASE"/>
    <property type="match status" value="1"/>
</dbReference>
<dbReference type="Pfam" id="PF00365">
    <property type="entry name" value="PFK"/>
    <property type="match status" value="1"/>
</dbReference>
<dbReference type="PIRSF" id="PIRSF000532">
    <property type="entry name" value="ATP_PFK_prok"/>
    <property type="match status" value="1"/>
</dbReference>
<dbReference type="PRINTS" id="PR00476">
    <property type="entry name" value="PHFRCTKINASE"/>
</dbReference>
<dbReference type="SUPFAM" id="SSF53784">
    <property type="entry name" value="Phosphofructokinase"/>
    <property type="match status" value="1"/>
</dbReference>
<dbReference type="PROSITE" id="PS00433">
    <property type="entry name" value="PHOSPHOFRUCTOKINASE"/>
    <property type="match status" value="1"/>
</dbReference>
<accession>B8F8G9</accession>
<sequence length="321" mass="35198">MVKKIAVLTSGGDAPGMNAAIRGVVRAGLSEGLEVYGIQDGYYGLYHDRVIKLERRSVSEVINRGGTFLGSARFPEFKNPEVRAKCVETLKKYEIDALVVIGGDGSYMGAKLLTEEHGIACIGLPGTIDNDVAGTDYTIGFQTALETALEAIDRLRDTSTSHQRISIVEIMGRHCGDLTLSAALAGGCEYIIIPEKGFDKESLIRNIEDGFNKGKRHAIIAITELMTDVHQLAREIEERFGHETRAAVLGHTQRGGAPCAFDRILASRMGVYAVELLMQGYGGRCVGIQNEKLVHHDIIDAITNMRRPFKEEIFNTSRKLF</sequence>
<feature type="chain" id="PRO_1000192373" description="ATP-dependent 6-phosphofructokinase">
    <location>
        <begin position="1"/>
        <end position="321"/>
    </location>
</feature>
<feature type="active site" description="Proton acceptor" evidence="1">
    <location>
        <position position="129"/>
    </location>
</feature>
<feature type="binding site" evidence="1">
    <location>
        <position position="12"/>
    </location>
    <ligand>
        <name>ATP</name>
        <dbReference type="ChEBI" id="CHEBI:30616"/>
    </ligand>
</feature>
<feature type="binding site" evidence="1">
    <location>
        <begin position="22"/>
        <end position="26"/>
    </location>
    <ligand>
        <name>ADP</name>
        <dbReference type="ChEBI" id="CHEBI:456216"/>
        <note>allosteric activator; ligand shared between dimeric partners</note>
    </ligand>
</feature>
<feature type="binding site" evidence="1">
    <location>
        <begin position="73"/>
        <end position="74"/>
    </location>
    <ligand>
        <name>ATP</name>
        <dbReference type="ChEBI" id="CHEBI:30616"/>
    </ligand>
</feature>
<feature type="binding site" evidence="1">
    <location>
        <begin position="103"/>
        <end position="106"/>
    </location>
    <ligand>
        <name>ATP</name>
        <dbReference type="ChEBI" id="CHEBI:30616"/>
    </ligand>
</feature>
<feature type="binding site" evidence="1">
    <location>
        <position position="104"/>
    </location>
    <ligand>
        <name>Mg(2+)</name>
        <dbReference type="ChEBI" id="CHEBI:18420"/>
        <note>catalytic</note>
    </ligand>
</feature>
<feature type="binding site" description="in other chain" evidence="1">
    <location>
        <begin position="127"/>
        <end position="129"/>
    </location>
    <ligand>
        <name>substrate</name>
        <note>ligand shared between dimeric partners</note>
    </ligand>
</feature>
<feature type="binding site" description="in other chain" evidence="1">
    <location>
        <position position="156"/>
    </location>
    <ligand>
        <name>ADP</name>
        <dbReference type="ChEBI" id="CHEBI:456216"/>
        <note>allosteric activator; ligand shared between dimeric partners</note>
    </ligand>
</feature>
<feature type="binding site" evidence="1">
    <location>
        <position position="164"/>
    </location>
    <ligand>
        <name>substrate</name>
        <note>ligand shared between dimeric partners</note>
    </ligand>
</feature>
<feature type="binding site" description="in other chain" evidence="1">
    <location>
        <begin position="171"/>
        <end position="173"/>
    </location>
    <ligand>
        <name>substrate</name>
        <note>ligand shared between dimeric partners</note>
    </ligand>
</feature>
<feature type="binding site" description="in other chain" evidence="1">
    <location>
        <begin position="187"/>
        <end position="189"/>
    </location>
    <ligand>
        <name>ADP</name>
        <dbReference type="ChEBI" id="CHEBI:456216"/>
        <note>allosteric activator; ligand shared between dimeric partners</note>
    </ligand>
</feature>
<feature type="binding site" description="in other chain" evidence="1">
    <location>
        <position position="213"/>
    </location>
    <ligand>
        <name>ADP</name>
        <dbReference type="ChEBI" id="CHEBI:456216"/>
        <note>allosteric activator; ligand shared between dimeric partners</note>
    </ligand>
</feature>
<feature type="binding site" description="in other chain" evidence="1">
    <location>
        <begin position="215"/>
        <end position="217"/>
    </location>
    <ligand>
        <name>ADP</name>
        <dbReference type="ChEBI" id="CHEBI:456216"/>
        <note>allosteric activator; ligand shared between dimeric partners</note>
    </ligand>
</feature>
<feature type="binding site" description="in other chain" evidence="1">
    <location>
        <position position="224"/>
    </location>
    <ligand>
        <name>substrate</name>
        <note>ligand shared between dimeric partners</note>
    </ligand>
</feature>
<feature type="binding site" evidence="1">
    <location>
        <position position="245"/>
    </location>
    <ligand>
        <name>substrate</name>
        <note>ligand shared between dimeric partners</note>
    </ligand>
</feature>
<feature type="binding site" description="in other chain" evidence="1">
    <location>
        <begin position="251"/>
        <end position="254"/>
    </location>
    <ligand>
        <name>substrate</name>
        <note>ligand shared between dimeric partners</note>
    </ligand>
</feature>